<organism>
    <name type="scientific">Salmonella typhi</name>
    <dbReference type="NCBI Taxonomy" id="90370"/>
    <lineage>
        <taxon>Bacteria</taxon>
        <taxon>Pseudomonadati</taxon>
        <taxon>Pseudomonadota</taxon>
        <taxon>Gammaproteobacteria</taxon>
        <taxon>Enterobacterales</taxon>
        <taxon>Enterobacteriaceae</taxon>
        <taxon>Salmonella</taxon>
    </lineage>
</organism>
<comment type="function">
    <text evidence="1">Involved in DNA repair and RecF pathway recombination.</text>
</comment>
<comment type="subunit">
    <text evidence="1">Monomer.</text>
</comment>
<comment type="similarity">
    <text evidence="2">Belongs to the RecO family.</text>
</comment>
<sequence length="242" mass="27472">MEGWQRAFVLHSRPWSETSLMLDVFTEESGRVRLVAKGARSKRSNLKGALQPFTPLLLRYSGRGEVKTLRSAEAVSLALPLSGITLYSGLYINELLSRVLEYETRFSELFFDYLNCIQALAGTTGSPEPALRRFELALLGHLGYGVNFTHCAGSGERVDDTMTYRYREEKGFFASVVIDNNTFTGRHLKALEAREFPDVDTLRAAKRFTRMALKPYLGGKPLKSRELFRQFMPKRTVKTKKD</sequence>
<protein>
    <recommendedName>
        <fullName>DNA repair protein RecO</fullName>
    </recommendedName>
    <alternativeName>
        <fullName>Recombination protein O</fullName>
    </alternativeName>
</protein>
<accession>P0A286</accession>
<accession>Q56058</accession>
<keyword id="KW-0227">DNA damage</keyword>
<keyword id="KW-0233">DNA recombination</keyword>
<keyword id="KW-0234">DNA repair</keyword>
<evidence type="ECO:0000250" key="1"/>
<evidence type="ECO:0000305" key="2"/>
<gene>
    <name type="primary">recO</name>
    <name type="ordered locus">STY2825</name>
    <name type="ordered locus">t0278</name>
</gene>
<reference key="1">
    <citation type="journal article" date="2001" name="Nature">
        <title>Complete genome sequence of a multiple drug resistant Salmonella enterica serovar Typhi CT18.</title>
        <authorList>
            <person name="Parkhill J."/>
            <person name="Dougan G."/>
            <person name="James K.D."/>
            <person name="Thomson N.R."/>
            <person name="Pickard D."/>
            <person name="Wain J."/>
            <person name="Churcher C.M."/>
            <person name="Mungall K.L."/>
            <person name="Bentley S.D."/>
            <person name="Holden M.T.G."/>
            <person name="Sebaihia M."/>
            <person name="Baker S."/>
            <person name="Basham D."/>
            <person name="Brooks K."/>
            <person name="Chillingworth T."/>
            <person name="Connerton P."/>
            <person name="Cronin A."/>
            <person name="Davis P."/>
            <person name="Davies R.M."/>
            <person name="Dowd L."/>
            <person name="White N."/>
            <person name="Farrar J."/>
            <person name="Feltwell T."/>
            <person name="Hamlin N."/>
            <person name="Haque A."/>
            <person name="Hien T.T."/>
            <person name="Holroyd S."/>
            <person name="Jagels K."/>
            <person name="Krogh A."/>
            <person name="Larsen T.S."/>
            <person name="Leather S."/>
            <person name="Moule S."/>
            <person name="O'Gaora P."/>
            <person name="Parry C."/>
            <person name="Quail M.A."/>
            <person name="Rutherford K.M."/>
            <person name="Simmonds M."/>
            <person name="Skelton J."/>
            <person name="Stevens K."/>
            <person name="Whitehead S."/>
            <person name="Barrell B.G."/>
        </authorList>
    </citation>
    <scope>NUCLEOTIDE SEQUENCE [LARGE SCALE GENOMIC DNA]</scope>
    <source>
        <strain>CT18</strain>
    </source>
</reference>
<reference key="2">
    <citation type="journal article" date="2003" name="J. Bacteriol.">
        <title>Comparative genomics of Salmonella enterica serovar Typhi strains Ty2 and CT18.</title>
        <authorList>
            <person name="Deng W."/>
            <person name="Liou S.-R."/>
            <person name="Plunkett G. III"/>
            <person name="Mayhew G.F."/>
            <person name="Rose D.J."/>
            <person name="Burland V."/>
            <person name="Kodoyianni V."/>
            <person name="Schwartz D.C."/>
            <person name="Blattner F.R."/>
        </authorList>
    </citation>
    <scope>NUCLEOTIDE SEQUENCE [LARGE SCALE GENOMIC DNA]</scope>
    <source>
        <strain>ATCC 700931 / Ty2</strain>
    </source>
</reference>
<proteinExistence type="inferred from homology"/>
<feature type="chain" id="PRO_0000204991" description="DNA repair protein RecO">
    <location>
        <begin position="1"/>
        <end position="242"/>
    </location>
</feature>
<dbReference type="EMBL" id="AL513382">
    <property type="protein sequence ID" value="CAD02781.1"/>
    <property type="molecule type" value="Genomic_DNA"/>
</dbReference>
<dbReference type="EMBL" id="AE014613">
    <property type="protein sequence ID" value="AAO68003.1"/>
    <property type="molecule type" value="Genomic_DNA"/>
</dbReference>
<dbReference type="RefSeq" id="NP_457108.1">
    <property type="nucleotide sequence ID" value="NC_003198.1"/>
</dbReference>
<dbReference type="RefSeq" id="WP_000399380.1">
    <property type="nucleotide sequence ID" value="NZ_WSUR01000007.1"/>
</dbReference>
<dbReference type="SMR" id="P0A286"/>
<dbReference type="STRING" id="220341.gene:17586715"/>
<dbReference type="KEGG" id="stt:t0278"/>
<dbReference type="KEGG" id="sty:STY2825"/>
<dbReference type="PATRIC" id="fig|220341.7.peg.2873"/>
<dbReference type="eggNOG" id="COG1381">
    <property type="taxonomic scope" value="Bacteria"/>
</dbReference>
<dbReference type="HOGENOM" id="CLU_066645_1_0_6"/>
<dbReference type="OMA" id="YVLHSRA"/>
<dbReference type="OrthoDB" id="9804792at2"/>
<dbReference type="Proteomes" id="UP000000541">
    <property type="component" value="Chromosome"/>
</dbReference>
<dbReference type="Proteomes" id="UP000002670">
    <property type="component" value="Chromosome"/>
</dbReference>
<dbReference type="GO" id="GO:0043590">
    <property type="term" value="C:bacterial nucleoid"/>
    <property type="evidence" value="ECO:0007669"/>
    <property type="project" value="TreeGrafter"/>
</dbReference>
<dbReference type="GO" id="GO:0006310">
    <property type="term" value="P:DNA recombination"/>
    <property type="evidence" value="ECO:0007669"/>
    <property type="project" value="UniProtKB-UniRule"/>
</dbReference>
<dbReference type="GO" id="GO:0006302">
    <property type="term" value="P:double-strand break repair"/>
    <property type="evidence" value="ECO:0007669"/>
    <property type="project" value="TreeGrafter"/>
</dbReference>
<dbReference type="FunFam" id="1.20.1440.120:FF:000001">
    <property type="entry name" value="DNA repair protein RecO"/>
    <property type="match status" value="1"/>
</dbReference>
<dbReference type="FunFam" id="2.40.50.140:FF:000074">
    <property type="entry name" value="DNA repair protein RecO"/>
    <property type="match status" value="1"/>
</dbReference>
<dbReference type="Gene3D" id="2.40.50.140">
    <property type="entry name" value="Nucleic acid-binding proteins"/>
    <property type="match status" value="1"/>
</dbReference>
<dbReference type="Gene3D" id="1.20.1440.120">
    <property type="entry name" value="Recombination protein O, C-terminal domain"/>
    <property type="match status" value="1"/>
</dbReference>
<dbReference type="HAMAP" id="MF_00201">
    <property type="entry name" value="RecO"/>
    <property type="match status" value="1"/>
</dbReference>
<dbReference type="InterPro" id="IPR037278">
    <property type="entry name" value="ARFGAP/RecO"/>
</dbReference>
<dbReference type="InterPro" id="IPR022572">
    <property type="entry name" value="DNA_rep/recomb_RecO_N"/>
</dbReference>
<dbReference type="InterPro" id="IPR012340">
    <property type="entry name" value="NA-bd_OB-fold"/>
</dbReference>
<dbReference type="InterPro" id="IPR003717">
    <property type="entry name" value="RecO"/>
</dbReference>
<dbReference type="InterPro" id="IPR042242">
    <property type="entry name" value="RecO_C"/>
</dbReference>
<dbReference type="NCBIfam" id="TIGR00613">
    <property type="entry name" value="reco"/>
    <property type="match status" value="1"/>
</dbReference>
<dbReference type="PANTHER" id="PTHR33991">
    <property type="entry name" value="DNA REPAIR PROTEIN RECO"/>
    <property type="match status" value="1"/>
</dbReference>
<dbReference type="PANTHER" id="PTHR33991:SF1">
    <property type="entry name" value="DNA REPAIR PROTEIN RECO"/>
    <property type="match status" value="1"/>
</dbReference>
<dbReference type="Pfam" id="PF02565">
    <property type="entry name" value="RecO_C"/>
    <property type="match status" value="1"/>
</dbReference>
<dbReference type="Pfam" id="PF11967">
    <property type="entry name" value="RecO_N"/>
    <property type="match status" value="1"/>
</dbReference>
<dbReference type="SUPFAM" id="SSF57863">
    <property type="entry name" value="ArfGap/RecO-like zinc finger"/>
    <property type="match status" value="1"/>
</dbReference>
<dbReference type="SUPFAM" id="SSF50249">
    <property type="entry name" value="Nucleic acid-binding proteins"/>
    <property type="match status" value="1"/>
</dbReference>
<name>RECO_SALTI</name>